<organism>
    <name type="scientific">Saccharomyces cerevisiae (strain ATCC 204508 / S288c)</name>
    <name type="common">Baker's yeast</name>
    <dbReference type="NCBI Taxonomy" id="559292"/>
    <lineage>
        <taxon>Eukaryota</taxon>
        <taxon>Fungi</taxon>
        <taxon>Dikarya</taxon>
        <taxon>Ascomycota</taxon>
        <taxon>Saccharomycotina</taxon>
        <taxon>Saccharomycetes</taxon>
        <taxon>Saccharomycetales</taxon>
        <taxon>Saccharomycetaceae</taxon>
        <taxon>Saccharomyces</taxon>
    </lineage>
</organism>
<reference key="1">
    <citation type="journal article" date="1997" name="Nature">
        <title>The nucleotide sequence of Saccharomyces cerevisiae chromosome IX.</title>
        <authorList>
            <person name="Churcher C.M."/>
            <person name="Bowman S."/>
            <person name="Badcock K."/>
            <person name="Bankier A.T."/>
            <person name="Brown D."/>
            <person name="Chillingworth T."/>
            <person name="Connor R."/>
            <person name="Devlin K."/>
            <person name="Gentles S."/>
            <person name="Hamlin N."/>
            <person name="Harris D.E."/>
            <person name="Horsnell T."/>
            <person name="Hunt S."/>
            <person name="Jagels K."/>
            <person name="Jones M."/>
            <person name="Lye G."/>
            <person name="Moule S."/>
            <person name="Odell C."/>
            <person name="Pearson D."/>
            <person name="Rajandream M.A."/>
            <person name="Rice P."/>
            <person name="Rowley N."/>
            <person name="Skelton J."/>
            <person name="Smith V."/>
            <person name="Walsh S.V."/>
            <person name="Whitehead S."/>
            <person name="Barrell B.G."/>
        </authorList>
    </citation>
    <scope>NUCLEOTIDE SEQUENCE [LARGE SCALE GENOMIC DNA]</scope>
    <source>
        <strain>ATCC 204508 / S288c</strain>
    </source>
</reference>
<reference key="2">
    <citation type="journal article" date="2014" name="G3 (Bethesda)">
        <title>The reference genome sequence of Saccharomyces cerevisiae: Then and now.</title>
        <authorList>
            <person name="Engel S.R."/>
            <person name="Dietrich F.S."/>
            <person name="Fisk D.G."/>
            <person name="Binkley G."/>
            <person name="Balakrishnan R."/>
            <person name="Costanzo M.C."/>
            <person name="Dwight S.S."/>
            <person name="Hitz B.C."/>
            <person name="Karra K."/>
            <person name="Nash R.S."/>
            <person name="Weng S."/>
            <person name="Wong E.D."/>
            <person name="Lloyd P."/>
            <person name="Skrzypek M.S."/>
            <person name="Miyasato S.R."/>
            <person name="Simison M."/>
            <person name="Cherry J.M."/>
        </authorList>
    </citation>
    <scope>GENOME REANNOTATION</scope>
    <source>
        <strain>ATCC 204508 / S288c</strain>
    </source>
</reference>
<reference key="3">
    <citation type="journal article" date="2003" name="Yeast">
        <title>Identification of multicopy suppressors of cell cycle arrest at the G1-S transition in Saccharomyces cerevisiae.</title>
        <authorList>
            <person name="Munoz I."/>
            <person name="Simon E."/>
            <person name="Casals N."/>
            <person name="Clotet J."/>
            <person name="Arino J."/>
        </authorList>
    </citation>
    <scope>FUNCTION</scope>
</reference>
<reference key="4">
    <citation type="journal article" date="2003" name="Nature">
        <title>Global analysis of protein localization in budding yeast.</title>
        <authorList>
            <person name="Huh W.-K."/>
            <person name="Falvo J.V."/>
            <person name="Gerke L.C."/>
            <person name="Carroll A.S."/>
            <person name="Howson R.W."/>
            <person name="Weissman J.S."/>
            <person name="O'Shea E.K."/>
        </authorList>
    </citation>
    <scope>SUBCELLULAR LOCATION [LARGE SCALE ANALYSIS]</scope>
</reference>
<reference key="5">
    <citation type="journal article" date="2003" name="Nature">
        <title>Global analysis of protein expression in yeast.</title>
        <authorList>
            <person name="Ghaemmaghami S."/>
            <person name="Huh W.-K."/>
            <person name="Bower K."/>
            <person name="Howson R.W."/>
            <person name="Belle A."/>
            <person name="Dephoure N."/>
            <person name="O'Shea E.K."/>
            <person name="Weissman J.S."/>
        </authorList>
    </citation>
    <scope>LEVEL OF PROTEIN EXPRESSION [LARGE SCALE ANALYSIS]</scope>
</reference>
<reference key="6">
    <citation type="journal article" date="2007" name="J. Proteome Res.">
        <title>Large-scale phosphorylation analysis of alpha-factor-arrested Saccharomyces cerevisiae.</title>
        <authorList>
            <person name="Li X."/>
            <person name="Gerber S.A."/>
            <person name="Rudner A.D."/>
            <person name="Beausoleil S.A."/>
            <person name="Haas W."/>
            <person name="Villen J."/>
            <person name="Elias J.E."/>
            <person name="Gygi S.P."/>
        </authorList>
    </citation>
    <scope>PHOSPHORYLATION [LARGE SCALE ANALYSIS] AT SER-303 AND SER-325</scope>
    <scope>IDENTIFICATION BY MASS SPECTROMETRY [LARGE SCALE ANALYSIS]</scope>
    <source>
        <strain>ADR376</strain>
    </source>
</reference>
<reference key="7">
    <citation type="journal article" date="2008" name="Mol. Cell. Proteomics">
        <title>A multidimensional chromatography technology for in-depth phosphoproteome analysis.</title>
        <authorList>
            <person name="Albuquerque C.P."/>
            <person name="Smolka M.B."/>
            <person name="Payne S.H."/>
            <person name="Bafna V."/>
            <person name="Eng J."/>
            <person name="Zhou H."/>
        </authorList>
    </citation>
    <scope>PHOSPHORYLATION [LARGE SCALE ANALYSIS] AT SER-301</scope>
    <scope>IDENTIFICATION BY MASS SPECTROMETRY [LARGE SCALE ANALYSIS]</scope>
</reference>
<reference key="8">
    <citation type="journal article" date="2009" name="Science">
        <title>Global analysis of Cdk1 substrate phosphorylation sites provides insights into evolution.</title>
        <authorList>
            <person name="Holt L.J."/>
            <person name="Tuch B.B."/>
            <person name="Villen J."/>
            <person name="Johnson A.D."/>
            <person name="Gygi S.P."/>
            <person name="Morgan D.O."/>
        </authorList>
    </citation>
    <scope>PHOSPHORYLATION [LARGE SCALE ANALYSIS] AT SER-53; SER-61; SER-102; SER-172; SER-299 AND SER-303</scope>
    <scope>IDENTIFICATION BY MASS SPECTROMETRY [LARGE SCALE ANALYSIS]</scope>
</reference>
<protein>
    <recommendedName>
        <fullName>Protein VHS2</fullName>
    </recommendedName>
    <alternativeName>
        <fullName>Viable in a HAL3 SIT4 background protein 2</fullName>
    </alternativeName>
</protein>
<name>VHS2_YEAST</name>
<sequence length="436" mass="47961">MDTSNHNQDHDSHVAAQRENDNNYMPPSPSMSESSMIFERNVEDPSYLYKTVSNNAANSLSRQSSRTSLFNHNNSSNRNFHNLSQRSSAVNLHLQPSRTNESIASYQTYNPDFVVQTPLDHRRTLENFVPPALDAGCSIVTDDTTGLDDVDMVYSRRPSTIGLDRALGRTRSLSSQSFDNETSPAHPRSPNDHGSRLLRFYSYADMLSDDNNNNVSNATSTSSTANPLRRPPMQGHYSFSSSLLNSPSHLPSPPSASASPPQHMNFTNPFIISRRYSNTTINNANGGTSAGSTTGAALSRSPSNQQYLLKQQRSPSGSARSRRNSNRPGSAANIMIGKPKSKFHMESSGSEGFSSEEEDNTMIERDKLNLKQKLQSQLAQPPSIANMVNDNHNNTNKHKNTINNNIKNSPAFTNSNPSSKSNSNSTITSMNPDTTK</sequence>
<accession>P40463</accession>
<accession>D6VVF1</accession>
<comment type="function">
    <text evidence="2">Can suppress the synthetic lethality of the hal3 sit4 double mutation when overexpressed, suggesting that it is involved in the G1-S transition.</text>
</comment>
<comment type="subcellular location">
    <subcellularLocation>
        <location evidence="3">Cytoplasm</location>
    </subcellularLocation>
</comment>
<comment type="miscellaneous">
    <text evidence="4">Present with 2200 molecules/cell in log phase SD medium.</text>
</comment>
<comment type="similarity">
    <text evidence="5">To yeast MFL3.</text>
</comment>
<evidence type="ECO:0000256" key="1">
    <source>
        <dbReference type="SAM" id="MobiDB-lite"/>
    </source>
</evidence>
<evidence type="ECO:0000269" key="2">
    <source>
    </source>
</evidence>
<evidence type="ECO:0000269" key="3">
    <source>
    </source>
</evidence>
<evidence type="ECO:0000269" key="4">
    <source>
    </source>
</evidence>
<evidence type="ECO:0000305" key="5"/>
<evidence type="ECO:0007744" key="6">
    <source>
    </source>
</evidence>
<evidence type="ECO:0007744" key="7">
    <source>
    </source>
</evidence>
<evidence type="ECO:0007744" key="8">
    <source>
    </source>
</evidence>
<keyword id="KW-0131">Cell cycle</keyword>
<keyword id="KW-0963">Cytoplasm</keyword>
<keyword id="KW-0597">Phosphoprotein</keyword>
<keyword id="KW-1185">Reference proteome</keyword>
<proteinExistence type="evidence at protein level"/>
<feature type="chain" id="PRO_0000065812" description="Protein VHS2">
    <location>
        <begin position="1"/>
        <end position="436"/>
    </location>
</feature>
<feature type="region of interest" description="Disordered" evidence="1">
    <location>
        <begin position="1"/>
        <end position="34"/>
    </location>
</feature>
<feature type="region of interest" description="Disordered" evidence="1">
    <location>
        <begin position="165"/>
        <end position="195"/>
    </location>
</feature>
<feature type="region of interest" description="Disordered" evidence="1">
    <location>
        <begin position="211"/>
        <end position="266"/>
    </location>
</feature>
<feature type="region of interest" description="Disordered" evidence="1">
    <location>
        <begin position="282"/>
        <end position="360"/>
    </location>
</feature>
<feature type="region of interest" description="Disordered" evidence="1">
    <location>
        <begin position="389"/>
        <end position="436"/>
    </location>
</feature>
<feature type="compositionally biased region" description="Basic and acidic residues" evidence="1">
    <location>
        <begin position="7"/>
        <end position="21"/>
    </location>
</feature>
<feature type="compositionally biased region" description="Polar residues" evidence="1">
    <location>
        <begin position="171"/>
        <end position="183"/>
    </location>
</feature>
<feature type="compositionally biased region" description="Low complexity" evidence="1">
    <location>
        <begin position="211"/>
        <end position="226"/>
    </location>
</feature>
<feature type="compositionally biased region" description="Low complexity" evidence="1">
    <location>
        <begin position="238"/>
        <end position="261"/>
    </location>
</feature>
<feature type="compositionally biased region" description="Low complexity" evidence="1">
    <location>
        <begin position="282"/>
        <end position="299"/>
    </location>
</feature>
<feature type="compositionally biased region" description="Polar residues" evidence="1">
    <location>
        <begin position="300"/>
        <end position="312"/>
    </location>
</feature>
<feature type="compositionally biased region" description="Low complexity" evidence="1">
    <location>
        <begin position="401"/>
        <end position="436"/>
    </location>
</feature>
<feature type="modified residue" description="Phosphoserine" evidence="8">
    <location>
        <position position="53"/>
    </location>
</feature>
<feature type="modified residue" description="Phosphoserine" evidence="8">
    <location>
        <position position="61"/>
    </location>
</feature>
<feature type="modified residue" description="Phosphoserine" evidence="8">
    <location>
        <position position="102"/>
    </location>
</feature>
<feature type="modified residue" description="Phosphoserine" evidence="8">
    <location>
        <position position="172"/>
    </location>
</feature>
<feature type="modified residue" description="Phosphoserine" evidence="8">
    <location>
        <position position="299"/>
    </location>
</feature>
<feature type="modified residue" description="Phosphoserine" evidence="7">
    <location>
        <position position="301"/>
    </location>
</feature>
<feature type="modified residue" description="Phosphoserine" evidence="6 8">
    <location>
        <position position="303"/>
    </location>
</feature>
<feature type="modified residue" description="Phosphoserine" evidence="6">
    <location>
        <position position="325"/>
    </location>
</feature>
<gene>
    <name type="primary">VHS2</name>
    <name type="ordered locus">YIL135C</name>
</gene>
<dbReference type="EMBL" id="Z38059">
    <property type="protein sequence ID" value="CAA86143.1"/>
    <property type="molecule type" value="Genomic_DNA"/>
</dbReference>
<dbReference type="EMBL" id="BK006942">
    <property type="protein sequence ID" value="DAA08417.1"/>
    <property type="molecule type" value="Genomic_DNA"/>
</dbReference>
<dbReference type="PIR" id="S48399">
    <property type="entry name" value="S48399"/>
</dbReference>
<dbReference type="RefSeq" id="NP_012131.1">
    <property type="nucleotide sequence ID" value="NM_001179483.1"/>
</dbReference>
<dbReference type="BioGRID" id="34856">
    <property type="interactions" value="111"/>
</dbReference>
<dbReference type="DIP" id="DIP-5269N"/>
<dbReference type="FunCoup" id="P40463">
    <property type="interactions" value="38"/>
</dbReference>
<dbReference type="IntAct" id="P40463">
    <property type="interactions" value="10"/>
</dbReference>
<dbReference type="MINT" id="P40463"/>
<dbReference type="STRING" id="4932.YIL135C"/>
<dbReference type="CarbonylDB" id="P40463"/>
<dbReference type="GlyGen" id="P40463">
    <property type="glycosylation" value="2 sites, 1 O-linked glycan (2 sites)"/>
</dbReference>
<dbReference type="iPTMnet" id="P40463"/>
<dbReference type="PaxDb" id="4932-YIL135C"/>
<dbReference type="PeptideAtlas" id="P40463"/>
<dbReference type="EnsemblFungi" id="YIL135C_mRNA">
    <property type="protein sequence ID" value="YIL135C"/>
    <property type="gene ID" value="YIL135C"/>
</dbReference>
<dbReference type="GeneID" id="854671"/>
<dbReference type="KEGG" id="sce:YIL135C"/>
<dbReference type="AGR" id="SGD:S000001397"/>
<dbReference type="SGD" id="S000001397">
    <property type="gene designation" value="VHS2"/>
</dbReference>
<dbReference type="VEuPathDB" id="FungiDB:YIL135C"/>
<dbReference type="eggNOG" id="ENOG502S4KQ">
    <property type="taxonomic scope" value="Eukaryota"/>
</dbReference>
<dbReference type="GeneTree" id="ENSGT00940000176806"/>
<dbReference type="HOGENOM" id="CLU_628749_0_0_1"/>
<dbReference type="InParanoid" id="P40463"/>
<dbReference type="OMA" id="AQRENDN"/>
<dbReference type="OrthoDB" id="5364312at2759"/>
<dbReference type="BioCyc" id="YEAST:G3O-31386-MONOMER"/>
<dbReference type="BioGRID-ORCS" id="854671">
    <property type="hits" value="6 hits in 10 CRISPR screens"/>
</dbReference>
<dbReference type="PRO" id="PR:P40463"/>
<dbReference type="Proteomes" id="UP000002311">
    <property type="component" value="Chromosome IX"/>
</dbReference>
<dbReference type="RNAct" id="P40463">
    <property type="molecule type" value="protein"/>
</dbReference>
<dbReference type="GO" id="GO:0005737">
    <property type="term" value="C:cytoplasm"/>
    <property type="evidence" value="ECO:0000314"/>
    <property type="project" value="SGD"/>
</dbReference>
<dbReference type="GO" id="GO:0032186">
    <property type="term" value="P:cellular bud neck septin ring organization"/>
    <property type="evidence" value="ECO:0000315"/>
    <property type="project" value="SGD"/>
</dbReference>
<dbReference type="GO" id="GO:0034605">
    <property type="term" value="P:cellular response to heat"/>
    <property type="evidence" value="ECO:0000316"/>
    <property type="project" value="SGD"/>
</dbReference>
<dbReference type="GO" id="GO:0030950">
    <property type="term" value="P:establishment or maintenance of actin cytoskeleton polarity"/>
    <property type="evidence" value="ECO:0000316"/>
    <property type="project" value="SGD"/>
</dbReference>